<gene>
    <name evidence="1" type="primary">rplM</name>
    <name type="ordered locus">VSAL_I2664</name>
</gene>
<comment type="function">
    <text evidence="1">This protein is one of the early assembly proteins of the 50S ribosomal subunit, although it is not seen to bind rRNA by itself. It is important during the early stages of 50S assembly.</text>
</comment>
<comment type="subunit">
    <text evidence="1">Part of the 50S ribosomal subunit.</text>
</comment>
<comment type="similarity">
    <text evidence="1">Belongs to the universal ribosomal protein uL13 family.</text>
</comment>
<sequence>MKTFVAKPAAVKRDWYVVDAEGKTLGRIATEIASRLRGKHKAEYTPHVDTGDYIIVINAEKVRVTGNKAAGKIYYRHSEFPGGLKSISFEKLIDRKPEMVIELAVKGMLPRGPLGRAMYRKLKVYAGVEHNHSAQQPQVLDI</sequence>
<organism>
    <name type="scientific">Aliivibrio salmonicida (strain LFI1238)</name>
    <name type="common">Vibrio salmonicida (strain LFI1238)</name>
    <dbReference type="NCBI Taxonomy" id="316275"/>
    <lineage>
        <taxon>Bacteria</taxon>
        <taxon>Pseudomonadati</taxon>
        <taxon>Pseudomonadota</taxon>
        <taxon>Gammaproteobacteria</taxon>
        <taxon>Vibrionales</taxon>
        <taxon>Vibrionaceae</taxon>
        <taxon>Aliivibrio</taxon>
    </lineage>
</organism>
<protein>
    <recommendedName>
        <fullName evidence="1">Large ribosomal subunit protein uL13</fullName>
    </recommendedName>
    <alternativeName>
        <fullName evidence="2">50S ribosomal protein L13</fullName>
    </alternativeName>
</protein>
<evidence type="ECO:0000255" key="1">
    <source>
        <dbReference type="HAMAP-Rule" id="MF_01366"/>
    </source>
</evidence>
<evidence type="ECO:0000305" key="2"/>
<accession>B6ELJ5</accession>
<keyword id="KW-0687">Ribonucleoprotein</keyword>
<keyword id="KW-0689">Ribosomal protein</keyword>
<feature type="chain" id="PRO_1000144085" description="Large ribosomal subunit protein uL13">
    <location>
        <begin position="1"/>
        <end position="142"/>
    </location>
</feature>
<proteinExistence type="inferred from homology"/>
<name>RL13_ALISL</name>
<dbReference type="EMBL" id="FM178379">
    <property type="protein sequence ID" value="CAQ80348.1"/>
    <property type="molecule type" value="Genomic_DNA"/>
</dbReference>
<dbReference type="RefSeq" id="WP_012551119.1">
    <property type="nucleotide sequence ID" value="NC_011312.1"/>
</dbReference>
<dbReference type="SMR" id="B6ELJ5"/>
<dbReference type="KEGG" id="vsa:VSAL_I2664"/>
<dbReference type="eggNOG" id="COG0102">
    <property type="taxonomic scope" value="Bacteria"/>
</dbReference>
<dbReference type="HOGENOM" id="CLU_082184_2_2_6"/>
<dbReference type="Proteomes" id="UP000001730">
    <property type="component" value="Chromosome 1"/>
</dbReference>
<dbReference type="GO" id="GO:0022625">
    <property type="term" value="C:cytosolic large ribosomal subunit"/>
    <property type="evidence" value="ECO:0007669"/>
    <property type="project" value="TreeGrafter"/>
</dbReference>
<dbReference type="GO" id="GO:0003729">
    <property type="term" value="F:mRNA binding"/>
    <property type="evidence" value="ECO:0007669"/>
    <property type="project" value="TreeGrafter"/>
</dbReference>
<dbReference type="GO" id="GO:0003735">
    <property type="term" value="F:structural constituent of ribosome"/>
    <property type="evidence" value="ECO:0007669"/>
    <property type="project" value="InterPro"/>
</dbReference>
<dbReference type="GO" id="GO:0017148">
    <property type="term" value="P:negative regulation of translation"/>
    <property type="evidence" value="ECO:0007669"/>
    <property type="project" value="TreeGrafter"/>
</dbReference>
<dbReference type="GO" id="GO:0006412">
    <property type="term" value="P:translation"/>
    <property type="evidence" value="ECO:0007669"/>
    <property type="project" value="UniProtKB-UniRule"/>
</dbReference>
<dbReference type="CDD" id="cd00392">
    <property type="entry name" value="Ribosomal_L13"/>
    <property type="match status" value="1"/>
</dbReference>
<dbReference type="FunFam" id="3.90.1180.10:FF:000001">
    <property type="entry name" value="50S ribosomal protein L13"/>
    <property type="match status" value="1"/>
</dbReference>
<dbReference type="Gene3D" id="3.90.1180.10">
    <property type="entry name" value="Ribosomal protein L13"/>
    <property type="match status" value="1"/>
</dbReference>
<dbReference type="HAMAP" id="MF_01366">
    <property type="entry name" value="Ribosomal_uL13"/>
    <property type="match status" value="1"/>
</dbReference>
<dbReference type="InterPro" id="IPR005822">
    <property type="entry name" value="Ribosomal_uL13"/>
</dbReference>
<dbReference type="InterPro" id="IPR005823">
    <property type="entry name" value="Ribosomal_uL13_bac-type"/>
</dbReference>
<dbReference type="InterPro" id="IPR023563">
    <property type="entry name" value="Ribosomal_uL13_CS"/>
</dbReference>
<dbReference type="InterPro" id="IPR036899">
    <property type="entry name" value="Ribosomal_uL13_sf"/>
</dbReference>
<dbReference type="NCBIfam" id="TIGR01066">
    <property type="entry name" value="rplM_bact"/>
    <property type="match status" value="1"/>
</dbReference>
<dbReference type="PANTHER" id="PTHR11545:SF2">
    <property type="entry name" value="LARGE RIBOSOMAL SUBUNIT PROTEIN UL13M"/>
    <property type="match status" value="1"/>
</dbReference>
<dbReference type="PANTHER" id="PTHR11545">
    <property type="entry name" value="RIBOSOMAL PROTEIN L13"/>
    <property type="match status" value="1"/>
</dbReference>
<dbReference type="Pfam" id="PF00572">
    <property type="entry name" value="Ribosomal_L13"/>
    <property type="match status" value="1"/>
</dbReference>
<dbReference type="PIRSF" id="PIRSF002181">
    <property type="entry name" value="Ribosomal_L13"/>
    <property type="match status" value="1"/>
</dbReference>
<dbReference type="SUPFAM" id="SSF52161">
    <property type="entry name" value="Ribosomal protein L13"/>
    <property type="match status" value="1"/>
</dbReference>
<dbReference type="PROSITE" id="PS00783">
    <property type="entry name" value="RIBOSOMAL_L13"/>
    <property type="match status" value="1"/>
</dbReference>
<reference key="1">
    <citation type="journal article" date="2008" name="BMC Genomics">
        <title>The genome sequence of the fish pathogen Aliivibrio salmonicida strain LFI1238 shows extensive evidence of gene decay.</title>
        <authorList>
            <person name="Hjerde E."/>
            <person name="Lorentzen M.S."/>
            <person name="Holden M.T."/>
            <person name="Seeger K."/>
            <person name="Paulsen S."/>
            <person name="Bason N."/>
            <person name="Churcher C."/>
            <person name="Harris D."/>
            <person name="Norbertczak H."/>
            <person name="Quail M.A."/>
            <person name="Sanders S."/>
            <person name="Thurston S."/>
            <person name="Parkhill J."/>
            <person name="Willassen N.P."/>
            <person name="Thomson N.R."/>
        </authorList>
    </citation>
    <scope>NUCLEOTIDE SEQUENCE [LARGE SCALE GENOMIC DNA]</scope>
    <source>
        <strain>LFI1238</strain>
    </source>
</reference>